<accession>P80271</accession>
<gene>
    <name type="primary">hbb</name>
</gene>
<dbReference type="PIR" id="S43023">
    <property type="entry name" value="S43023"/>
</dbReference>
<dbReference type="SMR" id="P80271"/>
<dbReference type="GO" id="GO:0072562">
    <property type="term" value="C:blood microparticle"/>
    <property type="evidence" value="ECO:0007669"/>
    <property type="project" value="TreeGrafter"/>
</dbReference>
<dbReference type="GO" id="GO:0031838">
    <property type="term" value="C:haptoglobin-hemoglobin complex"/>
    <property type="evidence" value="ECO:0007669"/>
    <property type="project" value="TreeGrafter"/>
</dbReference>
<dbReference type="GO" id="GO:0005833">
    <property type="term" value="C:hemoglobin complex"/>
    <property type="evidence" value="ECO:0007669"/>
    <property type="project" value="InterPro"/>
</dbReference>
<dbReference type="GO" id="GO:0031720">
    <property type="term" value="F:haptoglobin binding"/>
    <property type="evidence" value="ECO:0007669"/>
    <property type="project" value="TreeGrafter"/>
</dbReference>
<dbReference type="GO" id="GO:0020037">
    <property type="term" value="F:heme binding"/>
    <property type="evidence" value="ECO:0007669"/>
    <property type="project" value="InterPro"/>
</dbReference>
<dbReference type="GO" id="GO:0046872">
    <property type="term" value="F:metal ion binding"/>
    <property type="evidence" value="ECO:0007669"/>
    <property type="project" value="UniProtKB-KW"/>
</dbReference>
<dbReference type="GO" id="GO:0043177">
    <property type="term" value="F:organic acid binding"/>
    <property type="evidence" value="ECO:0007669"/>
    <property type="project" value="TreeGrafter"/>
</dbReference>
<dbReference type="GO" id="GO:0019825">
    <property type="term" value="F:oxygen binding"/>
    <property type="evidence" value="ECO:0007669"/>
    <property type="project" value="InterPro"/>
</dbReference>
<dbReference type="GO" id="GO:0005344">
    <property type="term" value="F:oxygen carrier activity"/>
    <property type="evidence" value="ECO:0007669"/>
    <property type="project" value="UniProtKB-KW"/>
</dbReference>
<dbReference type="GO" id="GO:0004601">
    <property type="term" value="F:peroxidase activity"/>
    <property type="evidence" value="ECO:0007669"/>
    <property type="project" value="TreeGrafter"/>
</dbReference>
<dbReference type="GO" id="GO:0042744">
    <property type="term" value="P:hydrogen peroxide catabolic process"/>
    <property type="evidence" value="ECO:0007669"/>
    <property type="project" value="TreeGrafter"/>
</dbReference>
<dbReference type="CDD" id="cd08925">
    <property type="entry name" value="Hb-beta-like"/>
    <property type="match status" value="1"/>
</dbReference>
<dbReference type="FunFam" id="1.10.490.10:FF:000001">
    <property type="entry name" value="Hemoglobin subunit beta"/>
    <property type="match status" value="1"/>
</dbReference>
<dbReference type="Gene3D" id="1.10.490.10">
    <property type="entry name" value="Globins"/>
    <property type="match status" value="1"/>
</dbReference>
<dbReference type="InterPro" id="IPR000971">
    <property type="entry name" value="Globin"/>
</dbReference>
<dbReference type="InterPro" id="IPR009050">
    <property type="entry name" value="Globin-like_sf"/>
</dbReference>
<dbReference type="InterPro" id="IPR012292">
    <property type="entry name" value="Globin/Proto"/>
</dbReference>
<dbReference type="InterPro" id="IPR002337">
    <property type="entry name" value="Hemoglobin_b"/>
</dbReference>
<dbReference type="InterPro" id="IPR050056">
    <property type="entry name" value="Hemoglobin_oxygen_transport"/>
</dbReference>
<dbReference type="PANTHER" id="PTHR11442">
    <property type="entry name" value="HEMOGLOBIN FAMILY MEMBER"/>
    <property type="match status" value="1"/>
</dbReference>
<dbReference type="PANTHER" id="PTHR11442:SF7">
    <property type="entry name" value="HEMOGLOBIN SUBUNIT EPSILON"/>
    <property type="match status" value="1"/>
</dbReference>
<dbReference type="Pfam" id="PF00042">
    <property type="entry name" value="Globin"/>
    <property type="match status" value="1"/>
</dbReference>
<dbReference type="PRINTS" id="PR00814">
    <property type="entry name" value="BETAHAEM"/>
</dbReference>
<dbReference type="SUPFAM" id="SSF46458">
    <property type="entry name" value="Globin-like"/>
    <property type="match status" value="1"/>
</dbReference>
<dbReference type="PROSITE" id="PS01033">
    <property type="entry name" value="GLOBIN"/>
    <property type="match status" value="1"/>
</dbReference>
<protein>
    <recommendedName>
        <fullName>Hemoglobin subunit beta</fullName>
    </recommendedName>
    <alternativeName>
        <fullName>Beta-globin</fullName>
    </alternativeName>
    <alternativeName>
        <fullName>Hemoglobin beta chain</fullName>
    </alternativeName>
</protein>
<evidence type="ECO:0000255" key="1">
    <source>
        <dbReference type="PROSITE-ProRule" id="PRU00238"/>
    </source>
</evidence>
<evidence type="ECO:0000269" key="2">
    <source>
    </source>
</evidence>
<organism>
    <name type="scientific">Chelidonichthys kumu</name>
    <name type="common">Bluefin gurnard</name>
    <name type="synonym">Trigla kumu</name>
    <dbReference type="NCBI Taxonomy" id="334942"/>
    <lineage>
        <taxon>Eukaryota</taxon>
        <taxon>Metazoa</taxon>
        <taxon>Chordata</taxon>
        <taxon>Craniata</taxon>
        <taxon>Vertebrata</taxon>
        <taxon>Euteleostomi</taxon>
        <taxon>Actinopterygii</taxon>
        <taxon>Neopterygii</taxon>
        <taxon>Teleostei</taxon>
        <taxon>Neoteleostei</taxon>
        <taxon>Acanthomorphata</taxon>
        <taxon>Eupercaria</taxon>
        <taxon>Perciformes</taxon>
        <taxon>Triglioidei</taxon>
        <taxon>Triglidae</taxon>
        <taxon>Chelidonichthys</taxon>
    </lineage>
</organism>
<sequence>VEWTDFERATIQDIFSKMDYETVGPATLTRTVIVYPWTLRYFAKFGNICSTAAILGNKEIAKHGTTILHGLDRGVKNMDDIKNTYAELSKLHSEKLHVDPDNFRLLSDCLTIVVAAKMGKDFTGEVQAAFQKFLSVVVNSLGRQYH</sequence>
<comment type="function">
    <text evidence="2">Involved in oxygen transport from gills to the various peripheral tissues.</text>
</comment>
<comment type="subunit">
    <text evidence="2">Heterotetramer of two alpha chains and two beta chains. Can form polymers.</text>
</comment>
<comment type="tissue specificity">
    <text>Red blood cells.</text>
</comment>
<comment type="miscellaneous">
    <text>Displays a strong alkaline Bohr effect, and at low pH exhibits the reduced ligand affinity and cooperativity that comprise the Root effect.</text>
</comment>
<comment type="similarity">
    <text evidence="1">Belongs to the globin family.</text>
</comment>
<name>HBB_CHEKU</name>
<reference key="1">
    <citation type="journal article" date="1993" name="Eur. J. Biochem.">
        <title>A polymerising Root-effect fish hemoglobin with high subunit heterogeneity. Correlation with primary structure.</title>
        <authorList>
            <person name="Fago A."/>
            <person name="Romano M."/>
            <person name="Tamburrini M."/>
            <person name="Coletta M."/>
            <person name="D'Avino R."/>
            <person name="di Prisco G."/>
        </authorList>
    </citation>
    <scope>PROTEIN SEQUENCE</scope>
    <scope>FUNCTION</scope>
    <scope>SUBUNIT</scope>
</reference>
<keyword id="KW-0903">Direct protein sequencing</keyword>
<keyword id="KW-1015">Disulfide bond</keyword>
<keyword id="KW-0349">Heme</keyword>
<keyword id="KW-0408">Iron</keyword>
<keyword id="KW-0479">Metal-binding</keyword>
<keyword id="KW-0561">Oxygen transport</keyword>
<keyword id="KW-0813">Transport</keyword>
<proteinExistence type="evidence at protein level"/>
<feature type="chain" id="PRO_0000052924" description="Hemoglobin subunit beta">
    <location>
        <begin position="1"/>
        <end position="146"/>
    </location>
</feature>
<feature type="domain" description="Globin" evidence="1">
    <location>
        <begin position="2"/>
        <end position="146"/>
    </location>
</feature>
<feature type="binding site" description="distal binding residue">
    <location>
        <position position="63"/>
    </location>
    <ligand>
        <name>heme b</name>
        <dbReference type="ChEBI" id="CHEBI:60344"/>
    </ligand>
    <ligandPart>
        <name>Fe</name>
        <dbReference type="ChEBI" id="CHEBI:18248"/>
    </ligandPart>
</feature>
<feature type="binding site" description="proximal binding residue">
    <location>
        <position position="92"/>
    </location>
    <ligand>
        <name>heme b</name>
        <dbReference type="ChEBI" id="CHEBI:60344"/>
    </ligand>
    <ligandPart>
        <name>Fe</name>
        <dbReference type="ChEBI" id="CHEBI:18248"/>
    </ligandPart>
</feature>
<feature type="disulfide bond" description="Interchain (with another beta chain)">
    <location>
        <position position="49"/>
    </location>
</feature>